<sequence>MNSNIYAVIVTYNPELKNLNALITELKEQNCYVVVVDNRTNFTLKDKLADIEKVHLICLGRNEGIAKAQNIGIRYSLEKGAEKIIFFDQDSRIRNEFIKKLSCYMDNENAKIAGPVFIDRDKSHYYPICNIKKNGLREKIHVTEGQTPFKSSVTISSGTMVSKEVFEIVGMMDEELFIDYVDTEWCLRCLNYGILVHIIPDIKMVHAIGDKSVKICGINIPIHSPVRRYYRVRNAFLLLRKNHVPLLLSIREVVFSLIHTTLIIATQKNKIEYMKKHILATLDGIRGITGGGRYNA</sequence>
<proteinExistence type="inferred from homology"/>
<comment type="pathway">
    <text>Bacterial outer membrane biogenesis; lipopolysaccharide biosynthesis.</text>
</comment>
<comment type="similarity">
    <text evidence="1">Belongs to the glycosyltransferase 2 family.</text>
</comment>
<reference key="1">
    <citation type="journal article" date="1994" name="J. Bacteriol.">
        <title>Characterization of the rfc region of Shigella flexneri.</title>
        <authorList>
            <person name="Morona R."/>
            <person name="Mavris M."/>
            <person name="Fallarino A."/>
            <person name="Manning P.A."/>
        </authorList>
    </citation>
    <scope>NUCLEOTIDE SEQUENCE [GENOMIC DNA]</scope>
    <source>
        <strain>PE577 / Serotype 2a</strain>
    </source>
</reference>
<reference key="2">
    <citation type="journal article" date="2002" name="Nucleic Acids Res.">
        <title>Genome sequence of Shigella flexneri 2a: insights into pathogenicity through comparison with genomes of Escherichia coli K12 and O157.</title>
        <authorList>
            <person name="Jin Q."/>
            <person name="Yuan Z."/>
            <person name="Xu J."/>
            <person name="Wang Y."/>
            <person name="Shen Y."/>
            <person name="Lu W."/>
            <person name="Wang J."/>
            <person name="Liu H."/>
            <person name="Yang J."/>
            <person name="Yang F."/>
            <person name="Zhang X."/>
            <person name="Zhang J."/>
            <person name="Yang G."/>
            <person name="Wu H."/>
            <person name="Qu D."/>
            <person name="Dong J."/>
            <person name="Sun L."/>
            <person name="Xue Y."/>
            <person name="Zhao A."/>
            <person name="Gao Y."/>
            <person name="Zhu J."/>
            <person name="Kan B."/>
            <person name="Ding K."/>
            <person name="Chen S."/>
            <person name="Cheng H."/>
            <person name="Yao Z."/>
            <person name="He B."/>
            <person name="Chen R."/>
            <person name="Ma D."/>
            <person name="Qiang B."/>
            <person name="Wen Y."/>
            <person name="Hou Y."/>
            <person name="Yu J."/>
        </authorList>
    </citation>
    <scope>NUCLEOTIDE SEQUENCE [LARGE SCALE GENOMIC DNA]</scope>
    <source>
        <strain>301 / Serotype 2a</strain>
    </source>
</reference>
<reference key="3">
    <citation type="journal article" date="2003" name="Infect. Immun.">
        <title>Complete genome sequence and comparative genomics of Shigella flexneri serotype 2a strain 2457T.</title>
        <authorList>
            <person name="Wei J."/>
            <person name="Goldberg M.B."/>
            <person name="Burland V."/>
            <person name="Venkatesan M.M."/>
            <person name="Deng W."/>
            <person name="Fournier G."/>
            <person name="Mayhew G.F."/>
            <person name="Plunkett G. III"/>
            <person name="Rose D.J."/>
            <person name="Darling A."/>
            <person name="Mau B."/>
            <person name="Perna N.T."/>
            <person name="Payne S.M."/>
            <person name="Runyen-Janecky L.J."/>
            <person name="Zhou S."/>
            <person name="Schwartz D.C."/>
            <person name="Blattner F.R."/>
        </authorList>
    </citation>
    <scope>NUCLEOTIDE SEQUENCE [LARGE SCALE GENOMIC DNA]</scope>
    <source>
        <strain>ATCC 700930 / 2457T / Serotype 2a</strain>
    </source>
</reference>
<gene>
    <name type="primary">rfbF</name>
    <name type="ordered locus">SF2099</name>
    <name type="ordered locus">S2221</name>
</gene>
<evidence type="ECO:0000305" key="1"/>
<name>RFBF_SHIFL</name>
<feature type="chain" id="PRO_0000059214" description="dTDP-rhamnosyl transferase RfbF">
    <location>
        <begin position="1"/>
        <end position="296"/>
    </location>
</feature>
<feature type="sequence conflict" description="In Ref. 1 and 3." evidence="1" ref="1 3">
    <original>K</original>
    <variation>E</variation>
    <location>
        <position position="203"/>
    </location>
</feature>
<keyword id="KW-0328">Glycosyltransferase</keyword>
<keyword id="KW-0448">Lipopolysaccharide biosynthesis</keyword>
<keyword id="KW-1185">Reference proteome</keyword>
<keyword id="KW-0808">Transferase</keyword>
<protein>
    <recommendedName>
        <fullName>dTDP-rhamnosyl transferase RfbF</fullName>
        <ecNumber>2.4.-.-</ecNumber>
    </recommendedName>
</protein>
<accession>P37782</accession>
<dbReference type="EC" id="2.4.-.-"/>
<dbReference type="EMBL" id="X71970">
    <property type="protein sequence ID" value="CAA50772.1"/>
    <property type="molecule type" value="Genomic_DNA"/>
</dbReference>
<dbReference type="EMBL" id="AE005674">
    <property type="protein sequence ID" value="AAN43638.1"/>
    <property type="molecule type" value="Genomic_DNA"/>
</dbReference>
<dbReference type="EMBL" id="AE014073">
    <property type="protein sequence ID" value="AAP17467.1"/>
    <property type="molecule type" value="Genomic_DNA"/>
</dbReference>
<dbReference type="PIR" id="A36966">
    <property type="entry name" value="A36966"/>
</dbReference>
<dbReference type="RefSeq" id="NP_707931.1">
    <property type="nucleotide sequence ID" value="NC_004337.2"/>
</dbReference>
<dbReference type="RefSeq" id="WP_001087598.1">
    <property type="nucleotide sequence ID" value="NZ_CP123365.1"/>
</dbReference>
<dbReference type="SMR" id="P37782"/>
<dbReference type="STRING" id="198214.SF2099"/>
<dbReference type="CAZy" id="GT2">
    <property type="family name" value="Glycosyltransferase Family 2"/>
</dbReference>
<dbReference type="PaxDb" id="198214-SF2099"/>
<dbReference type="GeneID" id="1026771"/>
<dbReference type="KEGG" id="sfl:SF2099"/>
<dbReference type="KEGG" id="sfx:S2221"/>
<dbReference type="PATRIC" id="fig|198214.7.peg.2507"/>
<dbReference type="HOGENOM" id="CLU_023845_9_1_6"/>
<dbReference type="UniPathway" id="UPA00030"/>
<dbReference type="Proteomes" id="UP000001006">
    <property type="component" value="Chromosome"/>
</dbReference>
<dbReference type="Proteomes" id="UP000002673">
    <property type="component" value="Chromosome"/>
</dbReference>
<dbReference type="GO" id="GO:0016757">
    <property type="term" value="F:glycosyltransferase activity"/>
    <property type="evidence" value="ECO:0007669"/>
    <property type="project" value="UniProtKB-KW"/>
</dbReference>
<dbReference type="GO" id="GO:0009103">
    <property type="term" value="P:lipopolysaccharide biosynthetic process"/>
    <property type="evidence" value="ECO:0007669"/>
    <property type="project" value="UniProtKB-UniPathway"/>
</dbReference>
<dbReference type="CDD" id="cd02526">
    <property type="entry name" value="GT2_RfbF_like"/>
    <property type="match status" value="1"/>
</dbReference>
<dbReference type="Gene3D" id="3.90.550.10">
    <property type="entry name" value="Spore Coat Polysaccharide Biosynthesis Protein SpsA, Chain A"/>
    <property type="match status" value="1"/>
</dbReference>
<dbReference type="InterPro" id="IPR001173">
    <property type="entry name" value="Glyco_trans_2-like"/>
</dbReference>
<dbReference type="InterPro" id="IPR029044">
    <property type="entry name" value="Nucleotide-diphossugar_trans"/>
</dbReference>
<dbReference type="InterPro" id="IPR006446">
    <property type="entry name" value="RhaTrfase"/>
</dbReference>
<dbReference type="NCBIfam" id="TIGR01556">
    <property type="entry name" value="rhamnosyltran"/>
    <property type="match status" value="1"/>
</dbReference>
<dbReference type="PANTHER" id="PTHR43179:SF12">
    <property type="entry name" value="GALACTOFURANOSYLTRANSFERASE GLFT2"/>
    <property type="match status" value="1"/>
</dbReference>
<dbReference type="PANTHER" id="PTHR43179">
    <property type="entry name" value="RHAMNOSYLTRANSFERASE WBBL"/>
    <property type="match status" value="1"/>
</dbReference>
<dbReference type="Pfam" id="PF00535">
    <property type="entry name" value="Glycos_transf_2"/>
    <property type="match status" value="1"/>
</dbReference>
<dbReference type="SUPFAM" id="SSF53448">
    <property type="entry name" value="Nucleotide-diphospho-sugar transferases"/>
    <property type="match status" value="1"/>
</dbReference>
<organism>
    <name type="scientific">Shigella flexneri</name>
    <dbReference type="NCBI Taxonomy" id="623"/>
    <lineage>
        <taxon>Bacteria</taxon>
        <taxon>Pseudomonadati</taxon>
        <taxon>Pseudomonadota</taxon>
        <taxon>Gammaproteobacteria</taxon>
        <taxon>Enterobacterales</taxon>
        <taxon>Enterobacteriaceae</taxon>
        <taxon>Shigella</taxon>
    </lineage>
</organism>